<protein>
    <recommendedName>
        <fullName evidence="1">DNA ligase</fullName>
        <ecNumber evidence="1">6.5.1.2</ecNumber>
    </recommendedName>
    <alternativeName>
        <fullName evidence="1">Polydeoxyribonucleotide synthase [NAD(+)]</fullName>
    </alternativeName>
</protein>
<sequence length="683" mass="75318">MSEVPAAIQEELNTLRETINDHNYRYYTLDDPSIPDAEYDRLMRRLREIEAEFPQTITPDSPTQRVGAAPAEGFETVSHRLPMLSLDNAFEEQDLLDFDRRVRERLKEAEDARIDYCCEPKLDGIAISLLYRDGYLVRGVTRGDGSAGEDITANVKTVKNIPLKLRGEGYPAELEVRGEIYLPKAAFDAINKDAAAKGEKTFVNPRNAAAGSLRQLDPRITAKRALEMCCYSVGYFEGELPGTQHDILTQLQQWGLKINSQMKLASGAQECLDYYRHIMSVRDQLPYEIDGVVFKVNRIDLQQELGFVSRAPRWAIAHKFPAHEEMTELLAVDFQVGRTGAVTPVARLKPVFVGGVTVSNATLHNMDEIRRLDVHIGDTVIIRRAGDVIPQVVSVVQDRRPENAVPVDRPEHCPVCGSDVLQLEGEAVARCSGGLYCSAQRKEAIKHFASRKAMDIDGLGDRLVELLVEKELIDSPASLYSLKAPDVAGLERMGEKSAQNLINAIEASKQTTFARFIYALGIREVGEATAKVLAQHFPTLDLLKQATEEDLVEAPDIGPISAGHIRSFFQQEHNLETIDALLNQGVSWPEVVVRSTETLPLSGQTAVVTGVLADYSRDEAKDLLTRLGAKVSGSVSAKTGFVVAGEKAGSKLTKAQDLGVKVLDEDAFKQLLEEHQAHLGGEA</sequence>
<keyword id="KW-0227">DNA damage</keyword>
<keyword id="KW-0234">DNA repair</keyword>
<keyword id="KW-0235">DNA replication</keyword>
<keyword id="KW-0436">Ligase</keyword>
<keyword id="KW-0460">Magnesium</keyword>
<keyword id="KW-0464">Manganese</keyword>
<keyword id="KW-0479">Metal-binding</keyword>
<keyword id="KW-0520">NAD</keyword>
<keyword id="KW-1185">Reference proteome</keyword>
<keyword id="KW-0862">Zinc</keyword>
<dbReference type="EC" id="6.5.1.2" evidence="1"/>
<dbReference type="EMBL" id="CP000155">
    <property type="protein sequence ID" value="ABC31427.1"/>
    <property type="molecule type" value="Genomic_DNA"/>
</dbReference>
<dbReference type="RefSeq" id="WP_011398492.1">
    <property type="nucleotide sequence ID" value="NC_007645.1"/>
</dbReference>
<dbReference type="SMR" id="Q2SD47"/>
<dbReference type="STRING" id="349521.HCH_04729"/>
<dbReference type="KEGG" id="hch:HCH_04729"/>
<dbReference type="eggNOG" id="COG0272">
    <property type="taxonomic scope" value="Bacteria"/>
</dbReference>
<dbReference type="HOGENOM" id="CLU_007764_2_1_6"/>
<dbReference type="OrthoDB" id="9759736at2"/>
<dbReference type="Proteomes" id="UP000000238">
    <property type="component" value="Chromosome"/>
</dbReference>
<dbReference type="GO" id="GO:0005829">
    <property type="term" value="C:cytosol"/>
    <property type="evidence" value="ECO:0007669"/>
    <property type="project" value="TreeGrafter"/>
</dbReference>
<dbReference type="GO" id="GO:0003677">
    <property type="term" value="F:DNA binding"/>
    <property type="evidence" value="ECO:0007669"/>
    <property type="project" value="InterPro"/>
</dbReference>
<dbReference type="GO" id="GO:0003911">
    <property type="term" value="F:DNA ligase (NAD+) activity"/>
    <property type="evidence" value="ECO:0007669"/>
    <property type="project" value="UniProtKB-UniRule"/>
</dbReference>
<dbReference type="GO" id="GO:0046872">
    <property type="term" value="F:metal ion binding"/>
    <property type="evidence" value="ECO:0007669"/>
    <property type="project" value="UniProtKB-KW"/>
</dbReference>
<dbReference type="GO" id="GO:0006281">
    <property type="term" value="P:DNA repair"/>
    <property type="evidence" value="ECO:0007669"/>
    <property type="project" value="UniProtKB-KW"/>
</dbReference>
<dbReference type="GO" id="GO:0006260">
    <property type="term" value="P:DNA replication"/>
    <property type="evidence" value="ECO:0007669"/>
    <property type="project" value="UniProtKB-KW"/>
</dbReference>
<dbReference type="CDD" id="cd17748">
    <property type="entry name" value="BRCT_DNA_ligase_like"/>
    <property type="match status" value="1"/>
</dbReference>
<dbReference type="CDD" id="cd00114">
    <property type="entry name" value="LIGANc"/>
    <property type="match status" value="1"/>
</dbReference>
<dbReference type="FunFam" id="1.10.150.20:FF:000006">
    <property type="entry name" value="DNA ligase"/>
    <property type="match status" value="1"/>
</dbReference>
<dbReference type="FunFam" id="1.10.150.20:FF:000007">
    <property type="entry name" value="DNA ligase"/>
    <property type="match status" value="1"/>
</dbReference>
<dbReference type="FunFam" id="1.10.287.610:FF:000002">
    <property type="entry name" value="DNA ligase"/>
    <property type="match status" value="1"/>
</dbReference>
<dbReference type="FunFam" id="2.40.50.140:FF:000012">
    <property type="entry name" value="DNA ligase"/>
    <property type="match status" value="1"/>
</dbReference>
<dbReference type="FunFam" id="3.30.470.30:FF:000001">
    <property type="entry name" value="DNA ligase"/>
    <property type="match status" value="1"/>
</dbReference>
<dbReference type="Gene3D" id="6.20.10.30">
    <property type="match status" value="1"/>
</dbReference>
<dbReference type="Gene3D" id="1.10.150.20">
    <property type="entry name" value="5' to 3' exonuclease, C-terminal subdomain"/>
    <property type="match status" value="2"/>
</dbReference>
<dbReference type="Gene3D" id="3.40.50.10190">
    <property type="entry name" value="BRCT domain"/>
    <property type="match status" value="1"/>
</dbReference>
<dbReference type="Gene3D" id="3.30.470.30">
    <property type="entry name" value="DNA ligase/mRNA capping enzyme"/>
    <property type="match status" value="1"/>
</dbReference>
<dbReference type="Gene3D" id="1.10.287.610">
    <property type="entry name" value="Helix hairpin bin"/>
    <property type="match status" value="1"/>
</dbReference>
<dbReference type="Gene3D" id="2.40.50.140">
    <property type="entry name" value="Nucleic acid-binding proteins"/>
    <property type="match status" value="1"/>
</dbReference>
<dbReference type="HAMAP" id="MF_01588">
    <property type="entry name" value="DNA_ligase_A"/>
    <property type="match status" value="1"/>
</dbReference>
<dbReference type="InterPro" id="IPR001357">
    <property type="entry name" value="BRCT_dom"/>
</dbReference>
<dbReference type="InterPro" id="IPR036420">
    <property type="entry name" value="BRCT_dom_sf"/>
</dbReference>
<dbReference type="InterPro" id="IPR041663">
    <property type="entry name" value="DisA/LigA_HHH"/>
</dbReference>
<dbReference type="InterPro" id="IPR001679">
    <property type="entry name" value="DNA_ligase"/>
</dbReference>
<dbReference type="InterPro" id="IPR018239">
    <property type="entry name" value="DNA_ligase_AS"/>
</dbReference>
<dbReference type="InterPro" id="IPR033136">
    <property type="entry name" value="DNA_ligase_CS"/>
</dbReference>
<dbReference type="InterPro" id="IPR013839">
    <property type="entry name" value="DNAligase_adenylation"/>
</dbReference>
<dbReference type="InterPro" id="IPR013840">
    <property type="entry name" value="DNAligase_N"/>
</dbReference>
<dbReference type="InterPro" id="IPR003583">
    <property type="entry name" value="Hlx-hairpin-Hlx_DNA-bd_motif"/>
</dbReference>
<dbReference type="InterPro" id="IPR012340">
    <property type="entry name" value="NA-bd_OB-fold"/>
</dbReference>
<dbReference type="InterPro" id="IPR004150">
    <property type="entry name" value="NAD_DNA_ligase_OB"/>
</dbReference>
<dbReference type="InterPro" id="IPR010994">
    <property type="entry name" value="RuvA_2-like"/>
</dbReference>
<dbReference type="InterPro" id="IPR004149">
    <property type="entry name" value="Znf_DNAligase_C4"/>
</dbReference>
<dbReference type="NCBIfam" id="TIGR00575">
    <property type="entry name" value="dnlj"/>
    <property type="match status" value="1"/>
</dbReference>
<dbReference type="NCBIfam" id="NF005932">
    <property type="entry name" value="PRK07956.1"/>
    <property type="match status" value="1"/>
</dbReference>
<dbReference type="PANTHER" id="PTHR23389">
    <property type="entry name" value="CHROMOSOME TRANSMISSION FIDELITY FACTOR 18"/>
    <property type="match status" value="1"/>
</dbReference>
<dbReference type="PANTHER" id="PTHR23389:SF9">
    <property type="entry name" value="DNA LIGASE"/>
    <property type="match status" value="1"/>
</dbReference>
<dbReference type="Pfam" id="PF00533">
    <property type="entry name" value="BRCT"/>
    <property type="match status" value="1"/>
</dbReference>
<dbReference type="Pfam" id="PF01653">
    <property type="entry name" value="DNA_ligase_aden"/>
    <property type="match status" value="1"/>
</dbReference>
<dbReference type="Pfam" id="PF03120">
    <property type="entry name" value="DNA_ligase_OB"/>
    <property type="match status" value="1"/>
</dbReference>
<dbReference type="Pfam" id="PF03119">
    <property type="entry name" value="DNA_ligase_ZBD"/>
    <property type="match status" value="1"/>
</dbReference>
<dbReference type="Pfam" id="PF12826">
    <property type="entry name" value="HHH_2"/>
    <property type="match status" value="1"/>
</dbReference>
<dbReference type="Pfam" id="PF14520">
    <property type="entry name" value="HHH_5"/>
    <property type="match status" value="1"/>
</dbReference>
<dbReference type="Pfam" id="PF22745">
    <property type="entry name" value="Nlig-Ia"/>
    <property type="match status" value="1"/>
</dbReference>
<dbReference type="PIRSF" id="PIRSF001604">
    <property type="entry name" value="LigA"/>
    <property type="match status" value="1"/>
</dbReference>
<dbReference type="SMART" id="SM00292">
    <property type="entry name" value="BRCT"/>
    <property type="match status" value="1"/>
</dbReference>
<dbReference type="SMART" id="SM00278">
    <property type="entry name" value="HhH1"/>
    <property type="match status" value="4"/>
</dbReference>
<dbReference type="SMART" id="SM00532">
    <property type="entry name" value="LIGANc"/>
    <property type="match status" value="1"/>
</dbReference>
<dbReference type="SUPFAM" id="SSF52113">
    <property type="entry name" value="BRCT domain"/>
    <property type="match status" value="1"/>
</dbReference>
<dbReference type="SUPFAM" id="SSF56091">
    <property type="entry name" value="DNA ligase/mRNA capping enzyme, catalytic domain"/>
    <property type="match status" value="1"/>
</dbReference>
<dbReference type="SUPFAM" id="SSF50249">
    <property type="entry name" value="Nucleic acid-binding proteins"/>
    <property type="match status" value="1"/>
</dbReference>
<dbReference type="SUPFAM" id="SSF47781">
    <property type="entry name" value="RuvA domain 2-like"/>
    <property type="match status" value="1"/>
</dbReference>
<dbReference type="PROSITE" id="PS50172">
    <property type="entry name" value="BRCT"/>
    <property type="match status" value="1"/>
</dbReference>
<dbReference type="PROSITE" id="PS01055">
    <property type="entry name" value="DNA_LIGASE_N1"/>
    <property type="match status" value="1"/>
</dbReference>
<dbReference type="PROSITE" id="PS01056">
    <property type="entry name" value="DNA_LIGASE_N2"/>
    <property type="match status" value="1"/>
</dbReference>
<gene>
    <name evidence="1" type="primary">ligA</name>
    <name type="ordered locus">HCH_04729</name>
</gene>
<name>DNLJ_HAHCH</name>
<accession>Q2SD47</accession>
<feature type="chain" id="PRO_0000313260" description="DNA ligase">
    <location>
        <begin position="1"/>
        <end position="683"/>
    </location>
</feature>
<feature type="domain" description="BRCT" evidence="1">
    <location>
        <begin position="596"/>
        <end position="683"/>
    </location>
</feature>
<feature type="active site" description="N6-AMP-lysine intermediate" evidence="1">
    <location>
        <position position="121"/>
    </location>
</feature>
<feature type="binding site" evidence="1">
    <location>
        <begin position="36"/>
        <end position="40"/>
    </location>
    <ligand>
        <name>NAD(+)</name>
        <dbReference type="ChEBI" id="CHEBI:57540"/>
    </ligand>
</feature>
<feature type="binding site" evidence="1">
    <location>
        <begin position="85"/>
        <end position="86"/>
    </location>
    <ligand>
        <name>NAD(+)</name>
        <dbReference type="ChEBI" id="CHEBI:57540"/>
    </ligand>
</feature>
<feature type="binding site" evidence="1">
    <location>
        <position position="119"/>
    </location>
    <ligand>
        <name>NAD(+)</name>
        <dbReference type="ChEBI" id="CHEBI:57540"/>
    </ligand>
</feature>
<feature type="binding site" evidence="1">
    <location>
        <position position="142"/>
    </location>
    <ligand>
        <name>NAD(+)</name>
        <dbReference type="ChEBI" id="CHEBI:57540"/>
    </ligand>
</feature>
<feature type="binding site" evidence="1">
    <location>
        <position position="179"/>
    </location>
    <ligand>
        <name>NAD(+)</name>
        <dbReference type="ChEBI" id="CHEBI:57540"/>
    </ligand>
</feature>
<feature type="binding site" evidence="1">
    <location>
        <position position="295"/>
    </location>
    <ligand>
        <name>NAD(+)</name>
        <dbReference type="ChEBI" id="CHEBI:57540"/>
    </ligand>
</feature>
<feature type="binding site" evidence="1">
    <location>
        <position position="319"/>
    </location>
    <ligand>
        <name>NAD(+)</name>
        <dbReference type="ChEBI" id="CHEBI:57540"/>
    </ligand>
</feature>
<feature type="binding site" evidence="1">
    <location>
        <position position="413"/>
    </location>
    <ligand>
        <name>Zn(2+)</name>
        <dbReference type="ChEBI" id="CHEBI:29105"/>
    </ligand>
</feature>
<feature type="binding site" evidence="1">
    <location>
        <position position="416"/>
    </location>
    <ligand>
        <name>Zn(2+)</name>
        <dbReference type="ChEBI" id="CHEBI:29105"/>
    </ligand>
</feature>
<feature type="binding site" evidence="1">
    <location>
        <position position="431"/>
    </location>
    <ligand>
        <name>Zn(2+)</name>
        <dbReference type="ChEBI" id="CHEBI:29105"/>
    </ligand>
</feature>
<feature type="binding site" evidence="1">
    <location>
        <position position="437"/>
    </location>
    <ligand>
        <name>Zn(2+)</name>
        <dbReference type="ChEBI" id="CHEBI:29105"/>
    </ligand>
</feature>
<comment type="function">
    <text evidence="1">DNA ligase that catalyzes the formation of phosphodiester linkages between 5'-phosphoryl and 3'-hydroxyl groups in double-stranded DNA using NAD as a coenzyme and as the energy source for the reaction. It is essential for DNA replication and repair of damaged DNA.</text>
</comment>
<comment type="catalytic activity">
    <reaction evidence="1">
        <text>NAD(+) + (deoxyribonucleotide)n-3'-hydroxyl + 5'-phospho-(deoxyribonucleotide)m = (deoxyribonucleotide)n+m + AMP + beta-nicotinamide D-nucleotide.</text>
        <dbReference type="EC" id="6.5.1.2"/>
    </reaction>
</comment>
<comment type="cofactor">
    <cofactor evidence="1">
        <name>Mg(2+)</name>
        <dbReference type="ChEBI" id="CHEBI:18420"/>
    </cofactor>
    <cofactor evidence="1">
        <name>Mn(2+)</name>
        <dbReference type="ChEBI" id="CHEBI:29035"/>
    </cofactor>
</comment>
<comment type="similarity">
    <text evidence="1">Belongs to the NAD-dependent DNA ligase family. LigA subfamily.</text>
</comment>
<reference key="1">
    <citation type="journal article" date="2005" name="Nucleic Acids Res.">
        <title>Genomic blueprint of Hahella chejuensis, a marine microbe producing an algicidal agent.</title>
        <authorList>
            <person name="Jeong H."/>
            <person name="Yim J.H."/>
            <person name="Lee C."/>
            <person name="Choi S.-H."/>
            <person name="Park Y.K."/>
            <person name="Yoon S.H."/>
            <person name="Hur C.-G."/>
            <person name="Kang H.-Y."/>
            <person name="Kim D."/>
            <person name="Lee H.H."/>
            <person name="Park K.H."/>
            <person name="Park S.-H."/>
            <person name="Park H.-S."/>
            <person name="Lee H.K."/>
            <person name="Oh T.K."/>
            <person name="Kim J.F."/>
        </authorList>
    </citation>
    <scope>NUCLEOTIDE SEQUENCE [LARGE SCALE GENOMIC DNA]</scope>
    <source>
        <strain>KCTC 2396</strain>
    </source>
</reference>
<evidence type="ECO:0000255" key="1">
    <source>
        <dbReference type="HAMAP-Rule" id="MF_01588"/>
    </source>
</evidence>
<proteinExistence type="inferred from homology"/>
<organism>
    <name type="scientific">Hahella chejuensis (strain KCTC 2396)</name>
    <dbReference type="NCBI Taxonomy" id="349521"/>
    <lineage>
        <taxon>Bacteria</taxon>
        <taxon>Pseudomonadati</taxon>
        <taxon>Pseudomonadota</taxon>
        <taxon>Gammaproteobacteria</taxon>
        <taxon>Oceanospirillales</taxon>
        <taxon>Hahellaceae</taxon>
        <taxon>Hahella</taxon>
    </lineage>
</organism>